<name>CRBA4_HUMAN</name>
<proteinExistence type="evidence at protein level"/>
<accession>P53673</accession>
<accession>Q4VB22</accession>
<accession>Q6ICE4</accession>
<evidence type="ECO:0000250" key="1"/>
<evidence type="ECO:0000255" key="2">
    <source>
        <dbReference type="PROSITE-ProRule" id="PRU00028"/>
    </source>
</evidence>
<evidence type="ECO:0000269" key="3">
    <source>
    </source>
</evidence>
<evidence type="ECO:0000269" key="4">
    <source>
    </source>
</evidence>
<evidence type="ECO:0000269" key="5">
    <source>
    </source>
</evidence>
<evidence type="ECO:0000305" key="6"/>
<evidence type="ECO:0007829" key="7">
    <source>
        <dbReference type="PDB" id="3LWK"/>
    </source>
</evidence>
<gene>
    <name type="primary">CRYBA4</name>
</gene>
<keyword id="KW-0002">3D-structure</keyword>
<keyword id="KW-0007">Acetylation</keyword>
<keyword id="KW-0898">Cataract</keyword>
<keyword id="KW-0903">Direct protein sequencing</keyword>
<keyword id="KW-0225">Disease variant</keyword>
<keyword id="KW-0273">Eye lens protein</keyword>
<keyword id="KW-1267">Proteomics identification</keyword>
<keyword id="KW-1185">Reference proteome</keyword>
<keyword id="KW-0677">Repeat</keyword>
<comment type="function">
    <text>Crystallins are the dominant structural components of the vertebrate eye lens.</text>
</comment>
<comment type="subunit">
    <text evidence="1">Homo/heterodimer, or complexes of higher-order. The structure of beta-crystallin oligomers seems to be stabilized through interactions between the N-terminal arms (By similarity).</text>
</comment>
<comment type="interaction">
    <interactant intactId="EBI-7519711">
        <id>P53673</id>
    </interactant>
    <interactant intactId="EBI-946029">
        <id>Q6P1W5</id>
        <label>C1orf94</label>
    </interactant>
    <organismsDiffer>false</organismsDiffer>
    <experiments>3</experiments>
</comment>
<comment type="interaction">
    <interactant intactId="EBI-7519711">
        <id>P53673</id>
    </interactant>
    <interactant intactId="EBI-740841">
        <id>Q8N5R6</id>
        <label>CCDC33</label>
    </interactant>
    <organismsDiffer>false</organismsDiffer>
    <experiments>3</experiments>
</comment>
<comment type="interaction">
    <interactant intactId="EBI-7519711">
        <id>P53673</id>
    </interactant>
    <interactant intactId="EBI-742887">
        <id>Q8TAP6</id>
        <label>CEP76</label>
    </interactant>
    <organismsDiffer>false</organismsDiffer>
    <experiments>9</experiments>
</comment>
<comment type="interaction">
    <interactant intactId="EBI-7519711">
        <id>P53673</id>
    </interactant>
    <interactant intactId="EBI-7519711">
        <id>P53673</id>
        <label>CRYBA4</label>
    </interactant>
    <organismsDiffer>false</organismsDiffer>
    <experiments>6</experiments>
</comment>
<comment type="interaction">
    <interactant intactId="EBI-7519711">
        <id>P53673</id>
    </interactant>
    <interactant intactId="EBI-7519424">
        <id>P53674</id>
        <label>CRYBB1</label>
    </interactant>
    <organismsDiffer>false</organismsDiffer>
    <experiments>3</experiments>
</comment>
<comment type="interaction">
    <interactant intactId="EBI-7519711">
        <id>P53673</id>
    </interactant>
    <interactant intactId="EBI-536772">
        <id>Q12805</id>
        <label>EFEMP1</label>
    </interactant>
    <organismsDiffer>false</organismsDiffer>
    <experiments>3</experiments>
</comment>
<comment type="interaction">
    <interactant intactId="EBI-7519711">
        <id>P53673</id>
    </interactant>
    <interactant intactId="EBI-750641">
        <id>Q5TD97</id>
        <label>FHL5</label>
    </interactant>
    <organismsDiffer>false</organismsDiffer>
    <experiments>3</experiments>
</comment>
<comment type="interaction">
    <interactant intactId="EBI-7519711">
        <id>P53673</id>
    </interactant>
    <interactant intactId="EBI-308084">
        <id>P08151</id>
        <label>GLI1</label>
    </interactant>
    <organismsDiffer>false</organismsDiffer>
    <experiments>3</experiments>
</comment>
<comment type="interaction">
    <interactant intactId="EBI-7519711">
        <id>P53673</id>
    </interactant>
    <interactant intactId="EBI-747204">
        <id>Q9UKT9</id>
        <label>IKZF3</label>
    </interactant>
    <organismsDiffer>false</organismsDiffer>
    <experiments>3</experiments>
</comment>
<comment type="interaction">
    <interactant intactId="EBI-7519711">
        <id>P53673</id>
    </interactant>
    <interactant intactId="EBI-9118295">
        <id>A9UHW6-2</id>
        <label>MIF4GD</label>
    </interactant>
    <organismsDiffer>false</organismsDiffer>
    <experiments>3</experiments>
</comment>
<comment type="interaction">
    <interactant intactId="EBI-7519711">
        <id>P53673</id>
    </interactant>
    <interactant intactId="EBI-714135">
        <id>O75558</id>
        <label>STX11</label>
    </interactant>
    <organismsDiffer>false</organismsDiffer>
    <experiments>3</experiments>
</comment>
<comment type="interaction">
    <interactant intactId="EBI-7519711">
        <id>P53673</id>
    </interactant>
    <interactant intactId="EBI-742327">
        <id>Q15654</id>
        <label>TRIP6</label>
    </interactant>
    <organismsDiffer>false</organismsDiffer>
    <experiments>3</experiments>
</comment>
<comment type="domain">
    <text>Has a two-domain beta-structure, folded into four very similar Greek key motifs.</text>
</comment>
<comment type="mass spectrometry"/>
<comment type="disease" evidence="3 4">
    <disease id="DI-01874">
        <name>Cataract 23, multiple types</name>
        <acronym>CTRCT23</acronym>
        <description>An opacification of the crystalline lens of the eye that frequently results in visual impairment or blindness. Opacities vary in morphology, are often confined to a portion of the lens, and may be static or progressive. In general, the more posteriorly located and dense an opacity, the greater the impact on visual function. CTRCT23 is a zonular cataract. Zonular or lamellar cataracts are opacities, broad or narrow, usually consisting of powdery white dots affecting only certain layers or zones between the cortex and nucleus of an otherwise clear lens. The opacity may be so dense as to render the entire central region of the lens completely opaque, or so translucent that vision is hardly if at all impeded. Zonular cataracts generally do not involve the embryonic nucleus, though sometimes they involve the fetal nucleus. Usually sharply separated from a clear cortex outside them, they may have projections from their outer edges known as riders or spokes.</description>
        <dbReference type="MIM" id="610425"/>
    </disease>
    <text>The disease is caused by variants affecting the gene represented in this entry.</text>
</comment>
<comment type="similarity">
    <text evidence="6">Belongs to the beta/gamma-crystallin family.</text>
</comment>
<comment type="sequence caution" evidence="6">
    <conflict type="erroneous initiation">
        <sequence resource="EMBL-CDS" id="CAG30310"/>
    </conflict>
</comment>
<protein>
    <recommendedName>
        <fullName>Beta-crystallin A4</fullName>
    </recommendedName>
    <alternativeName>
        <fullName>Beta-A4 crystallin</fullName>
    </alternativeName>
</protein>
<feature type="initiator methionine" description="Removed" evidence="5">
    <location>
        <position position="1"/>
    </location>
</feature>
<feature type="chain" id="PRO_0000057545" description="Beta-crystallin A4">
    <location>
        <begin position="2"/>
        <end position="196"/>
    </location>
</feature>
<feature type="domain" description="Beta/gamma crystallin 'Greek key' 1" evidence="2">
    <location>
        <begin position="12"/>
        <end position="51"/>
    </location>
</feature>
<feature type="domain" description="Beta/gamma crystallin 'Greek key' 2" evidence="2">
    <location>
        <begin position="52"/>
        <end position="98"/>
    </location>
</feature>
<feature type="domain" description="Beta/gamma crystallin 'Greek key' 3" evidence="2">
    <location>
        <begin position="105"/>
        <end position="146"/>
    </location>
</feature>
<feature type="domain" description="Beta/gamma crystallin 'Greek key' 4" evidence="2">
    <location>
        <begin position="147"/>
        <end position="195"/>
    </location>
</feature>
<feature type="region of interest" description="N-terminal arm">
    <location>
        <begin position="2"/>
        <end position="11"/>
    </location>
</feature>
<feature type="region of interest" description="Connecting peptide">
    <location>
        <begin position="99"/>
        <end position="104"/>
    </location>
</feature>
<feature type="modified residue" description="N-acetylthreonine" evidence="5">
    <location>
        <position position="2"/>
    </location>
</feature>
<feature type="sequence variant" id="VAR_033824" description="In dbSNP:rs35520672.">
    <original>V</original>
    <variation>M</variation>
    <location>
        <position position="36"/>
    </location>
</feature>
<feature type="sequence variant" id="VAR_078868" description="In CTRCT23; dbSNP:rs1114167427." evidence="4">
    <original>G</original>
    <variation>W</variation>
    <location>
        <position position="64"/>
    </location>
</feature>
<feature type="sequence variant" id="VAR_029528" description="In CTRCT23; the patient has cataract and bilateral microphthalmia; the mutation is predicted to disrupt the beta-sheet structure of the protein; dbSNP:rs74315487." evidence="3">
    <original>L</original>
    <variation>P</variation>
    <location>
        <position position="69"/>
    </location>
</feature>
<feature type="sequence variant" id="VAR_014903" description="In dbSNP:rs4277.">
    <original>T</original>
    <variation>M</variation>
    <location>
        <position position="84"/>
    </location>
</feature>
<feature type="sequence variant" id="VAR_029529" description="In CTRCT23; modeling suggests that this substitution would significantly reduce the intrinsic stability of the crystalline monomer; dbSNP:rs74315486." evidence="3">
    <original>F</original>
    <variation>S</variation>
    <location>
        <position position="94"/>
    </location>
</feature>
<feature type="strand" evidence="7">
    <location>
        <begin position="13"/>
        <end position="19"/>
    </location>
</feature>
<feature type="helix" evidence="7">
    <location>
        <begin position="20"/>
        <end position="22"/>
    </location>
</feature>
<feature type="strand" evidence="7">
    <location>
        <begin position="23"/>
        <end position="31"/>
    </location>
</feature>
<feature type="helix" evidence="7">
    <location>
        <begin position="36"/>
        <end position="39"/>
    </location>
</feature>
<feature type="strand" evidence="7">
    <location>
        <begin position="46"/>
        <end position="52"/>
    </location>
</feature>
<feature type="strand" evidence="7">
    <location>
        <begin position="54"/>
        <end position="59"/>
    </location>
</feature>
<feature type="helix" evidence="7">
    <location>
        <begin position="60"/>
        <end position="62"/>
    </location>
</feature>
<feature type="strand" evidence="7">
    <location>
        <begin position="63"/>
        <end position="69"/>
    </location>
</feature>
<feature type="strand" evidence="7">
    <location>
        <begin position="71"/>
        <end position="74"/>
    </location>
</feature>
<feature type="helix" evidence="7">
    <location>
        <begin position="78"/>
        <end position="81"/>
    </location>
</feature>
<feature type="strand" evidence="7">
    <location>
        <begin position="93"/>
        <end position="96"/>
    </location>
</feature>
<feature type="helix" evidence="7">
    <location>
        <begin position="102"/>
        <end position="104"/>
    </location>
</feature>
<feature type="strand" evidence="7">
    <location>
        <begin position="106"/>
        <end position="113"/>
    </location>
</feature>
<feature type="strand" evidence="7">
    <location>
        <begin position="119"/>
        <end position="124"/>
    </location>
</feature>
<feature type="helix" evidence="7">
    <location>
        <begin position="130"/>
        <end position="132"/>
    </location>
</feature>
<feature type="strand" evidence="7">
    <location>
        <begin position="136"/>
        <end position="138"/>
    </location>
</feature>
<feature type="strand" evidence="7">
    <location>
        <begin position="141"/>
        <end position="154"/>
    </location>
</feature>
<feature type="turn" evidence="7">
    <location>
        <begin position="155"/>
        <end position="157"/>
    </location>
</feature>
<feature type="strand" evidence="7">
    <location>
        <begin position="158"/>
        <end position="165"/>
    </location>
</feature>
<feature type="helix" evidence="7">
    <location>
        <begin position="169"/>
        <end position="171"/>
    </location>
</feature>
<feature type="turn" evidence="7">
    <location>
        <begin position="176"/>
        <end position="178"/>
    </location>
</feature>
<feature type="strand" evidence="7">
    <location>
        <begin position="190"/>
        <end position="193"/>
    </location>
</feature>
<dbReference type="EMBL" id="U59057">
    <property type="protein sequence ID" value="AAC50970.1"/>
    <property type="molecule type" value="mRNA"/>
</dbReference>
<dbReference type="EMBL" id="CR456424">
    <property type="protein sequence ID" value="CAG30310.1"/>
    <property type="status" value="ALT_INIT"/>
    <property type="molecule type" value="mRNA"/>
</dbReference>
<dbReference type="EMBL" id="Z95115">
    <property type="status" value="NOT_ANNOTATED_CDS"/>
    <property type="molecule type" value="Genomic_DNA"/>
</dbReference>
<dbReference type="EMBL" id="BC069404">
    <property type="protein sequence ID" value="AAH69404.1"/>
    <property type="molecule type" value="mRNA"/>
</dbReference>
<dbReference type="EMBL" id="BC096171">
    <property type="protein sequence ID" value="AAH96171.1"/>
    <property type="molecule type" value="mRNA"/>
</dbReference>
<dbReference type="EMBL" id="BC096172">
    <property type="protein sequence ID" value="AAH96172.1"/>
    <property type="molecule type" value="mRNA"/>
</dbReference>
<dbReference type="EMBL" id="BC096173">
    <property type="protein sequence ID" value="AAH96173.1"/>
    <property type="molecule type" value="mRNA"/>
</dbReference>
<dbReference type="EMBL" id="BC096174">
    <property type="protein sequence ID" value="AAH96174.1"/>
    <property type="molecule type" value="mRNA"/>
</dbReference>
<dbReference type="EMBL" id="S67583">
    <property type="protein sequence ID" value="AAD13994.1"/>
    <property type="molecule type" value="Genomic_DNA"/>
</dbReference>
<dbReference type="CCDS" id="CCDS13841.1"/>
<dbReference type="PIR" id="I54083">
    <property type="entry name" value="I54083"/>
</dbReference>
<dbReference type="RefSeq" id="NP_001877.1">
    <property type="nucleotide sequence ID" value="NM_001886.3"/>
</dbReference>
<dbReference type="RefSeq" id="XP_016884087.1">
    <property type="nucleotide sequence ID" value="XM_017028598.1"/>
</dbReference>
<dbReference type="PDB" id="3LWK">
    <property type="method" value="X-ray"/>
    <property type="resolution" value="1.70 A"/>
    <property type="chains" value="A=8-196"/>
</dbReference>
<dbReference type="PDBsum" id="3LWK"/>
<dbReference type="SMR" id="P53673"/>
<dbReference type="BioGRID" id="107803">
    <property type="interactions" value="38"/>
</dbReference>
<dbReference type="FunCoup" id="P53673">
    <property type="interactions" value="3"/>
</dbReference>
<dbReference type="IntAct" id="P53673">
    <property type="interactions" value="34"/>
</dbReference>
<dbReference type="MINT" id="P53673"/>
<dbReference type="STRING" id="9606.ENSP00000346805"/>
<dbReference type="GlyGen" id="P53673">
    <property type="glycosylation" value="1 site"/>
</dbReference>
<dbReference type="iPTMnet" id="P53673"/>
<dbReference type="PhosphoSitePlus" id="P53673"/>
<dbReference type="BioMuta" id="CRYBA4"/>
<dbReference type="DMDM" id="2506318"/>
<dbReference type="MassIVE" id="P53673"/>
<dbReference type="PaxDb" id="9606-ENSP00000346805"/>
<dbReference type="PeptideAtlas" id="P53673"/>
<dbReference type="ProteomicsDB" id="56606"/>
<dbReference type="Antibodypedia" id="24295">
    <property type="antibodies" value="132 antibodies from 22 providers"/>
</dbReference>
<dbReference type="DNASU" id="1413"/>
<dbReference type="Ensembl" id="ENST00000354760.4">
    <property type="protein sequence ID" value="ENSP00000346805.3"/>
    <property type="gene ID" value="ENSG00000196431.4"/>
</dbReference>
<dbReference type="GeneID" id="1413"/>
<dbReference type="KEGG" id="hsa:1413"/>
<dbReference type="MANE-Select" id="ENST00000354760.4">
    <property type="protein sequence ID" value="ENSP00000346805.3"/>
    <property type="RefSeq nucleotide sequence ID" value="NM_001886.3"/>
    <property type="RefSeq protein sequence ID" value="NP_001877.1"/>
</dbReference>
<dbReference type="UCSC" id="uc003acz.4">
    <property type="organism name" value="human"/>
</dbReference>
<dbReference type="AGR" id="HGNC:2396"/>
<dbReference type="CTD" id="1413"/>
<dbReference type="DisGeNET" id="1413"/>
<dbReference type="GeneCards" id="CRYBA4"/>
<dbReference type="HGNC" id="HGNC:2396">
    <property type="gene designation" value="CRYBA4"/>
</dbReference>
<dbReference type="HPA" id="ENSG00000196431">
    <property type="expression patterns" value="Group enriched (epididymis, testis)"/>
</dbReference>
<dbReference type="MalaCards" id="CRYBA4"/>
<dbReference type="MIM" id="123631">
    <property type="type" value="gene"/>
</dbReference>
<dbReference type="MIM" id="610425">
    <property type="type" value="phenotype"/>
</dbReference>
<dbReference type="neXtProt" id="NX_P53673"/>
<dbReference type="OpenTargets" id="ENSG00000196431"/>
<dbReference type="Orphanet" id="1377">
    <property type="disease" value="Cataract-microcornea syndrome"/>
</dbReference>
<dbReference type="Orphanet" id="441452">
    <property type="disease" value="Early-onset lamellar cataract"/>
</dbReference>
<dbReference type="PharmGKB" id="PA26910"/>
<dbReference type="VEuPathDB" id="HostDB:ENSG00000196431"/>
<dbReference type="eggNOG" id="ENOG502QTF8">
    <property type="taxonomic scope" value="Eukaryota"/>
</dbReference>
<dbReference type="GeneTree" id="ENSGT00940000160372"/>
<dbReference type="HOGENOM" id="CLU_081883_0_0_1"/>
<dbReference type="InParanoid" id="P53673"/>
<dbReference type="OMA" id="EFTSECY"/>
<dbReference type="OrthoDB" id="8688215at2759"/>
<dbReference type="PAN-GO" id="P53673">
    <property type="GO annotations" value="3 GO annotations based on evolutionary models"/>
</dbReference>
<dbReference type="PhylomeDB" id="P53673"/>
<dbReference type="TreeFam" id="TF331401"/>
<dbReference type="PathwayCommons" id="P53673"/>
<dbReference type="SignaLink" id="P53673"/>
<dbReference type="BioGRID-ORCS" id="1413">
    <property type="hits" value="11 hits in 1146 CRISPR screens"/>
</dbReference>
<dbReference type="ChiTaRS" id="CRYBA4">
    <property type="organism name" value="human"/>
</dbReference>
<dbReference type="EvolutionaryTrace" id="P53673"/>
<dbReference type="GeneWiki" id="CRYBA4"/>
<dbReference type="GenomeRNAi" id="1413"/>
<dbReference type="Pharos" id="P53673">
    <property type="development level" value="Tbio"/>
</dbReference>
<dbReference type="PRO" id="PR:P53673"/>
<dbReference type="Proteomes" id="UP000005640">
    <property type="component" value="Chromosome 22"/>
</dbReference>
<dbReference type="RNAct" id="P53673">
    <property type="molecule type" value="protein"/>
</dbReference>
<dbReference type="Bgee" id="ENSG00000196431">
    <property type="expression patterns" value="Expressed in male germ line stem cell (sensu Vertebrata) in testis and 59 other cell types or tissues"/>
</dbReference>
<dbReference type="ExpressionAtlas" id="P53673">
    <property type="expression patterns" value="baseline and differential"/>
</dbReference>
<dbReference type="GO" id="GO:0042802">
    <property type="term" value="F:identical protein binding"/>
    <property type="evidence" value="ECO:0000353"/>
    <property type="project" value="IntAct"/>
</dbReference>
<dbReference type="GO" id="GO:0005212">
    <property type="term" value="F:structural constituent of eye lens"/>
    <property type="evidence" value="ECO:0000318"/>
    <property type="project" value="GO_Central"/>
</dbReference>
<dbReference type="GO" id="GO:0043010">
    <property type="term" value="P:camera-type eye development"/>
    <property type="evidence" value="ECO:0000315"/>
    <property type="project" value="UniProtKB"/>
</dbReference>
<dbReference type="GO" id="GO:0002088">
    <property type="term" value="P:lens development in camera-type eye"/>
    <property type="evidence" value="ECO:0000318"/>
    <property type="project" value="GO_Central"/>
</dbReference>
<dbReference type="GO" id="GO:0007601">
    <property type="term" value="P:visual perception"/>
    <property type="evidence" value="ECO:0000315"/>
    <property type="project" value="UniProtKB"/>
</dbReference>
<dbReference type="FunFam" id="2.60.20.10:FF:000004">
    <property type="entry name" value="Crystallin beta A4"/>
    <property type="match status" value="1"/>
</dbReference>
<dbReference type="FunFam" id="2.60.20.10:FF:000002">
    <property type="entry name" value="Crystallin, beta B2"/>
    <property type="match status" value="1"/>
</dbReference>
<dbReference type="Gene3D" id="2.60.20.10">
    <property type="entry name" value="Crystallins"/>
    <property type="match status" value="2"/>
</dbReference>
<dbReference type="InterPro" id="IPR050252">
    <property type="entry name" value="Beta/Gamma-Crystallin"/>
</dbReference>
<dbReference type="InterPro" id="IPR001064">
    <property type="entry name" value="Beta/gamma_crystallin"/>
</dbReference>
<dbReference type="InterPro" id="IPR011024">
    <property type="entry name" value="G_crystallin-like"/>
</dbReference>
<dbReference type="PANTHER" id="PTHR11818:SF19">
    <property type="entry name" value="BETA-CRYSTALLIN A4"/>
    <property type="match status" value="1"/>
</dbReference>
<dbReference type="PANTHER" id="PTHR11818">
    <property type="entry name" value="BETA/GAMMA CRYSTALLIN"/>
    <property type="match status" value="1"/>
</dbReference>
<dbReference type="Pfam" id="PF00030">
    <property type="entry name" value="Crystall"/>
    <property type="match status" value="2"/>
</dbReference>
<dbReference type="PRINTS" id="PR01367">
    <property type="entry name" value="BGCRYSTALLIN"/>
</dbReference>
<dbReference type="SMART" id="SM00247">
    <property type="entry name" value="XTALbg"/>
    <property type="match status" value="2"/>
</dbReference>
<dbReference type="SUPFAM" id="SSF49695">
    <property type="entry name" value="gamma-Crystallin-like"/>
    <property type="match status" value="1"/>
</dbReference>
<dbReference type="PROSITE" id="PS50915">
    <property type="entry name" value="CRYSTALLIN_BETA_GAMMA"/>
    <property type="match status" value="4"/>
</dbReference>
<sequence>MTLQCTKSAGPWKMVVWDEDGFQGRRHEFTAECPSVLELGFETVRSLKVLSGAWVGFEHAGFQGQQYILERGEYPSWDAWGGNTAYPAERLTSFRPAACANHRDSRLTIFEQENFLGKKGELSDDYPSLQAMGWEGNEVGSFHVHSGAWVCSQFPGYRGFQYVLECDHHSGDYKHFREWGSHAPTFQVQSIRRIQQ</sequence>
<organism>
    <name type="scientific">Homo sapiens</name>
    <name type="common">Human</name>
    <dbReference type="NCBI Taxonomy" id="9606"/>
    <lineage>
        <taxon>Eukaryota</taxon>
        <taxon>Metazoa</taxon>
        <taxon>Chordata</taxon>
        <taxon>Craniata</taxon>
        <taxon>Vertebrata</taxon>
        <taxon>Euteleostomi</taxon>
        <taxon>Mammalia</taxon>
        <taxon>Eutheria</taxon>
        <taxon>Euarchontoglires</taxon>
        <taxon>Primates</taxon>
        <taxon>Haplorrhini</taxon>
        <taxon>Catarrhini</taxon>
        <taxon>Hominidae</taxon>
        <taxon>Homo</taxon>
    </lineage>
</organism>
<reference key="1">
    <citation type="journal article" date="1997" name="J. Biol. Chem.">
        <title>Sequence analysis of betaA3, betaB3, and betaA4 crystallins completes the identification of the major proteins in young human lens.</title>
        <authorList>
            <person name="Lampi K.J."/>
            <person name="Ma Z."/>
            <person name="Shih M."/>
            <person name="Shearer T.R."/>
            <person name="Smith J.B."/>
            <person name="Smith D.L."/>
            <person name="David L.L."/>
        </authorList>
    </citation>
    <scope>NUCLEOTIDE SEQUENCE [MRNA]</scope>
    <scope>PROTEIN SEQUENCE OF 14-25; 159-174 AND 178-192</scope>
    <scope>CLEAVAGE OF INITIATOR METHIONINE</scope>
    <scope>ACETYLATION AT THR-2</scope>
    <scope>MASS SPECTROMETRY</scope>
</reference>
<reference key="2">
    <citation type="journal article" date="2004" name="Genome Biol.">
        <title>A genome annotation-driven approach to cloning the human ORFeome.</title>
        <authorList>
            <person name="Collins J.E."/>
            <person name="Wright C.L."/>
            <person name="Edwards C.A."/>
            <person name="Davis M.P."/>
            <person name="Grinham J.A."/>
            <person name="Cole C.G."/>
            <person name="Goward M.E."/>
            <person name="Aguado B."/>
            <person name="Mallya M."/>
            <person name="Mokrab Y."/>
            <person name="Huckle E.J."/>
            <person name="Beare D.M."/>
            <person name="Dunham I."/>
        </authorList>
    </citation>
    <scope>NUCLEOTIDE SEQUENCE [LARGE SCALE MRNA]</scope>
</reference>
<reference key="3">
    <citation type="journal article" date="1999" name="Nature">
        <title>The DNA sequence of human chromosome 22.</title>
        <authorList>
            <person name="Dunham I."/>
            <person name="Hunt A.R."/>
            <person name="Collins J.E."/>
            <person name="Bruskiewich R."/>
            <person name="Beare D.M."/>
            <person name="Clamp M."/>
            <person name="Smink L.J."/>
            <person name="Ainscough R."/>
            <person name="Almeida J.P."/>
            <person name="Babbage A.K."/>
            <person name="Bagguley C."/>
            <person name="Bailey J."/>
            <person name="Barlow K.F."/>
            <person name="Bates K.N."/>
            <person name="Beasley O.P."/>
            <person name="Bird C.P."/>
            <person name="Blakey S.E."/>
            <person name="Bridgeman A.M."/>
            <person name="Buck D."/>
            <person name="Burgess J."/>
            <person name="Burrill W.D."/>
            <person name="Burton J."/>
            <person name="Carder C."/>
            <person name="Carter N.P."/>
            <person name="Chen Y."/>
            <person name="Clark G."/>
            <person name="Clegg S.M."/>
            <person name="Cobley V.E."/>
            <person name="Cole C.G."/>
            <person name="Collier R.E."/>
            <person name="Connor R."/>
            <person name="Conroy D."/>
            <person name="Corby N.R."/>
            <person name="Coville G.J."/>
            <person name="Cox A.V."/>
            <person name="Davis J."/>
            <person name="Dawson E."/>
            <person name="Dhami P.D."/>
            <person name="Dockree C."/>
            <person name="Dodsworth S.J."/>
            <person name="Durbin R.M."/>
            <person name="Ellington A.G."/>
            <person name="Evans K.L."/>
            <person name="Fey J.M."/>
            <person name="Fleming K."/>
            <person name="French L."/>
            <person name="Garner A.A."/>
            <person name="Gilbert J.G.R."/>
            <person name="Goward M.E."/>
            <person name="Grafham D.V."/>
            <person name="Griffiths M.N.D."/>
            <person name="Hall C."/>
            <person name="Hall R.E."/>
            <person name="Hall-Tamlyn G."/>
            <person name="Heathcott R.W."/>
            <person name="Ho S."/>
            <person name="Holmes S."/>
            <person name="Hunt S.E."/>
            <person name="Jones M.C."/>
            <person name="Kershaw J."/>
            <person name="Kimberley A.M."/>
            <person name="King A."/>
            <person name="Laird G.K."/>
            <person name="Langford C.F."/>
            <person name="Leversha M.A."/>
            <person name="Lloyd C."/>
            <person name="Lloyd D.M."/>
            <person name="Martyn I.D."/>
            <person name="Mashreghi-Mohammadi M."/>
            <person name="Matthews L.H."/>
            <person name="Mccann O.T."/>
            <person name="Mcclay J."/>
            <person name="Mclaren S."/>
            <person name="McMurray A.A."/>
            <person name="Milne S.A."/>
            <person name="Mortimore B.J."/>
            <person name="Odell C.N."/>
            <person name="Pavitt R."/>
            <person name="Pearce A.V."/>
            <person name="Pearson D."/>
            <person name="Phillimore B.J.C.T."/>
            <person name="Phillips S.H."/>
            <person name="Plumb R.W."/>
            <person name="Ramsay H."/>
            <person name="Ramsey Y."/>
            <person name="Rogers L."/>
            <person name="Ross M.T."/>
            <person name="Scott C.E."/>
            <person name="Sehra H.K."/>
            <person name="Skuce C.D."/>
            <person name="Smalley S."/>
            <person name="Smith M.L."/>
            <person name="Soderlund C."/>
            <person name="Spragon L."/>
            <person name="Steward C.A."/>
            <person name="Sulston J.E."/>
            <person name="Swann R.M."/>
            <person name="Vaudin M."/>
            <person name="Wall M."/>
            <person name="Wallis J.M."/>
            <person name="Whiteley M.N."/>
            <person name="Willey D.L."/>
            <person name="Williams L."/>
            <person name="Williams S.A."/>
            <person name="Williamson H."/>
            <person name="Wilmer T.E."/>
            <person name="Wilming L."/>
            <person name="Wright C.L."/>
            <person name="Hubbard T."/>
            <person name="Bentley D.R."/>
            <person name="Beck S."/>
            <person name="Rogers J."/>
            <person name="Shimizu N."/>
            <person name="Minoshima S."/>
            <person name="Kawasaki K."/>
            <person name="Sasaki T."/>
            <person name="Asakawa S."/>
            <person name="Kudoh J."/>
            <person name="Shintani A."/>
            <person name="Shibuya K."/>
            <person name="Yoshizaki Y."/>
            <person name="Aoki N."/>
            <person name="Mitsuyama S."/>
            <person name="Roe B.A."/>
            <person name="Chen F."/>
            <person name="Chu L."/>
            <person name="Crabtree J."/>
            <person name="Deschamps S."/>
            <person name="Do A."/>
            <person name="Do T."/>
            <person name="Dorman A."/>
            <person name="Fang F."/>
            <person name="Fu Y."/>
            <person name="Hu P."/>
            <person name="Hua A."/>
            <person name="Kenton S."/>
            <person name="Lai H."/>
            <person name="Lao H.I."/>
            <person name="Lewis J."/>
            <person name="Lewis S."/>
            <person name="Lin S.-P."/>
            <person name="Loh P."/>
            <person name="Malaj E."/>
            <person name="Nguyen T."/>
            <person name="Pan H."/>
            <person name="Phan S."/>
            <person name="Qi S."/>
            <person name="Qian Y."/>
            <person name="Ray L."/>
            <person name="Ren Q."/>
            <person name="Shaull S."/>
            <person name="Sloan D."/>
            <person name="Song L."/>
            <person name="Wang Q."/>
            <person name="Wang Y."/>
            <person name="Wang Z."/>
            <person name="White J."/>
            <person name="Willingham D."/>
            <person name="Wu H."/>
            <person name="Yao Z."/>
            <person name="Zhan M."/>
            <person name="Zhang G."/>
            <person name="Chissoe S."/>
            <person name="Murray J."/>
            <person name="Miller N."/>
            <person name="Minx P."/>
            <person name="Fulton R."/>
            <person name="Johnson D."/>
            <person name="Bemis G."/>
            <person name="Bentley D."/>
            <person name="Bradshaw H."/>
            <person name="Bourne S."/>
            <person name="Cordes M."/>
            <person name="Du Z."/>
            <person name="Fulton L."/>
            <person name="Goela D."/>
            <person name="Graves T."/>
            <person name="Hawkins J."/>
            <person name="Hinds K."/>
            <person name="Kemp K."/>
            <person name="Latreille P."/>
            <person name="Layman D."/>
            <person name="Ozersky P."/>
            <person name="Rohlfing T."/>
            <person name="Scheet P."/>
            <person name="Walker C."/>
            <person name="Wamsley A."/>
            <person name="Wohldmann P."/>
            <person name="Pepin K."/>
            <person name="Nelson J."/>
            <person name="Korf I."/>
            <person name="Bedell J.A."/>
            <person name="Hillier L.W."/>
            <person name="Mardis E."/>
            <person name="Waterston R."/>
            <person name="Wilson R."/>
            <person name="Emanuel B.S."/>
            <person name="Shaikh T."/>
            <person name="Kurahashi H."/>
            <person name="Saitta S."/>
            <person name="Budarf M.L."/>
            <person name="McDermid H.E."/>
            <person name="Johnson A."/>
            <person name="Wong A.C.C."/>
            <person name="Morrow B.E."/>
            <person name="Edelmann L."/>
            <person name="Kim U.J."/>
            <person name="Shizuya H."/>
            <person name="Simon M.I."/>
            <person name="Dumanski J.P."/>
            <person name="Peyrard M."/>
            <person name="Kedra D."/>
            <person name="Seroussi E."/>
            <person name="Fransson I."/>
            <person name="Tapia I."/>
            <person name="Bruder C.E."/>
            <person name="O'Brien K.P."/>
            <person name="Wilkinson P."/>
            <person name="Bodenteich A."/>
            <person name="Hartman K."/>
            <person name="Hu X."/>
            <person name="Khan A.S."/>
            <person name="Lane L."/>
            <person name="Tilahun Y."/>
            <person name="Wright H."/>
        </authorList>
    </citation>
    <scope>NUCLEOTIDE SEQUENCE [LARGE SCALE GENOMIC DNA]</scope>
</reference>
<reference key="4">
    <citation type="journal article" date="2004" name="Genome Res.">
        <title>The status, quality, and expansion of the NIH full-length cDNA project: the Mammalian Gene Collection (MGC).</title>
        <authorList>
            <consortium name="The MGC Project Team"/>
        </authorList>
    </citation>
    <scope>NUCLEOTIDE SEQUENCE [LARGE SCALE MRNA]</scope>
</reference>
<reference key="5">
    <citation type="journal article" date="1993" name="Genes Chromosomes Cancer">
        <title>Regional fine mapping of the beta crystallin genes on chromosome 22 excludes these genes as physically linked markers for neurofibromatosis type 2.</title>
        <authorList>
            <person name="Bijlsma E.K."/>
            <person name="Delattre O."/>
            <person name="Juyn J.A."/>
            <person name="Melot T."/>
            <person name="Westerveld A."/>
            <person name="Dumanski J.P."/>
            <person name="Thomas G."/>
            <person name="Hulsebos T.J.M."/>
        </authorList>
    </citation>
    <scope>NUCLEOTIDE SEQUENCE [GENOMIC DNA] OF 150-194</scope>
</reference>
<reference key="6">
    <citation type="journal article" date="2006" name="Am. J. Hum. Genet.">
        <title>CRYBA4, a novel human cataract gene, is also involved in microphthalmia.</title>
        <authorList>
            <person name="Billingsley G."/>
            <person name="Santhiya S.T."/>
            <person name="Paterson A.D."/>
            <person name="Ogata K."/>
            <person name="Wodak S."/>
            <person name="Hosseini S.M."/>
            <person name="Manisastry S.M."/>
            <person name="Vijayalakshmi P."/>
            <person name="Gopinath P.M."/>
            <person name="Graw J."/>
            <person name="Heon E."/>
        </authorList>
    </citation>
    <scope>INVOLVEMENT IN CTRCT23</scope>
    <scope>VARIANTS CTRCT23 PRO-69 AND SER-94</scope>
</reference>
<reference key="7">
    <citation type="journal article" date="2010" name="Mol. Vis.">
        <title>A missense mutation in CRYBA4 associated with congenital cataract and microcornea.</title>
        <authorList>
            <person name="Zhou G."/>
            <person name="Zhou N."/>
            <person name="Hu S."/>
            <person name="Zhao L."/>
            <person name="Zhang C."/>
            <person name="Qi Y."/>
        </authorList>
    </citation>
    <scope>INVOLVEMENT IN CTRCT23</scope>
    <scope>VARIANT CTRCT23 TRP-64</scope>
</reference>